<proteinExistence type="evidence at protein level"/>
<organism>
    <name type="scientific">Rattus norvegicus</name>
    <name type="common">Rat</name>
    <dbReference type="NCBI Taxonomy" id="10116"/>
    <lineage>
        <taxon>Eukaryota</taxon>
        <taxon>Metazoa</taxon>
        <taxon>Chordata</taxon>
        <taxon>Craniata</taxon>
        <taxon>Vertebrata</taxon>
        <taxon>Euteleostomi</taxon>
        <taxon>Mammalia</taxon>
        <taxon>Eutheria</taxon>
        <taxon>Euarchontoglires</taxon>
        <taxon>Glires</taxon>
        <taxon>Rodentia</taxon>
        <taxon>Myomorpha</taxon>
        <taxon>Muroidea</taxon>
        <taxon>Muridae</taxon>
        <taxon>Murinae</taxon>
        <taxon>Rattus</taxon>
    </lineage>
</organism>
<feature type="chain" id="PRO_0000334154" description="E3 ubiquitin-protein ligase SH3RF1">
    <location>
        <begin position="1"/>
        <end position="894"/>
    </location>
</feature>
<feature type="domain" description="SH3 1" evidence="5">
    <location>
        <begin position="134"/>
        <end position="193"/>
    </location>
</feature>
<feature type="domain" description="SH3 2" evidence="5">
    <location>
        <begin position="196"/>
        <end position="259"/>
    </location>
</feature>
<feature type="domain" description="SH3 3" evidence="5">
    <location>
        <begin position="453"/>
        <end position="514"/>
    </location>
</feature>
<feature type="domain" description="SH3 4" evidence="5">
    <location>
        <begin position="835"/>
        <end position="894"/>
    </location>
</feature>
<feature type="zinc finger region" description="RING-type" evidence="4">
    <location>
        <begin position="12"/>
        <end position="53"/>
    </location>
</feature>
<feature type="region of interest" description="Disordered" evidence="6">
    <location>
        <begin position="274"/>
        <end position="323"/>
    </location>
</feature>
<feature type="region of interest" description="Interaction with RAC1" evidence="3">
    <location>
        <begin position="293"/>
        <end position="363"/>
    </location>
</feature>
<feature type="region of interest" description="Interaction with AKT2" evidence="1">
    <location>
        <begin position="448"/>
        <end position="551"/>
    </location>
</feature>
<feature type="region of interest" description="Disordered" evidence="6">
    <location>
        <begin position="526"/>
        <end position="556"/>
    </location>
</feature>
<feature type="region of interest" description="Disordered" evidence="6">
    <location>
        <begin position="682"/>
        <end position="751"/>
    </location>
</feature>
<feature type="compositionally biased region" description="Low complexity" evidence="6">
    <location>
        <begin position="281"/>
        <end position="291"/>
    </location>
</feature>
<feature type="compositionally biased region" description="Polar residues" evidence="6">
    <location>
        <begin position="306"/>
        <end position="322"/>
    </location>
</feature>
<feature type="compositionally biased region" description="Polar residues" evidence="6">
    <location>
        <begin position="700"/>
        <end position="713"/>
    </location>
</feature>
<feature type="compositionally biased region" description="Basic and acidic residues" evidence="6">
    <location>
        <begin position="715"/>
        <end position="726"/>
    </location>
</feature>
<feature type="modified residue" description="Phosphoserine" evidence="3">
    <location>
        <position position="305"/>
    </location>
</feature>
<feature type="modified residue" description="Phosphoserine" evidence="3">
    <location>
        <position position="540"/>
    </location>
</feature>
<feature type="modified residue" description="Phosphoserine" evidence="12">
    <location>
        <position position="743"/>
    </location>
</feature>
<evidence type="ECO:0000250" key="1"/>
<evidence type="ECO:0000250" key="2">
    <source>
        <dbReference type="UniProtKB" id="Q69ZI1"/>
    </source>
</evidence>
<evidence type="ECO:0000250" key="3">
    <source>
        <dbReference type="UniProtKB" id="Q7Z6J0"/>
    </source>
</evidence>
<evidence type="ECO:0000255" key="4">
    <source>
        <dbReference type="PROSITE-ProRule" id="PRU00175"/>
    </source>
</evidence>
<evidence type="ECO:0000255" key="5">
    <source>
        <dbReference type="PROSITE-ProRule" id="PRU00192"/>
    </source>
</evidence>
<evidence type="ECO:0000256" key="6">
    <source>
        <dbReference type="SAM" id="MobiDB-lite"/>
    </source>
</evidence>
<evidence type="ECO:0000269" key="7">
    <source>
    </source>
</evidence>
<evidence type="ECO:0000269" key="8">
    <source>
    </source>
</evidence>
<evidence type="ECO:0000269" key="9">
    <source>
    </source>
</evidence>
<evidence type="ECO:0000269" key="10">
    <source>
    </source>
</evidence>
<evidence type="ECO:0000305" key="11"/>
<evidence type="ECO:0007744" key="12">
    <source>
    </source>
</evidence>
<name>SH3R1_RAT</name>
<dbReference type="EC" id="2.3.2.27" evidence="3"/>
<dbReference type="EMBL" id="AF515735">
    <property type="protein sequence ID" value="AAQ08184.1"/>
    <property type="molecule type" value="mRNA"/>
</dbReference>
<dbReference type="RefSeq" id="NP_942059.1">
    <property type="nucleotide sequence ID" value="NM_198764.2"/>
</dbReference>
<dbReference type="RefSeq" id="XP_017455595.1">
    <property type="nucleotide sequence ID" value="XM_017600106.1"/>
</dbReference>
<dbReference type="SMR" id="Q71F54"/>
<dbReference type="FunCoup" id="Q71F54">
    <property type="interactions" value="1213"/>
</dbReference>
<dbReference type="IntAct" id="Q71F54">
    <property type="interactions" value="1"/>
</dbReference>
<dbReference type="STRING" id="10116.ENSRNOP00000013815"/>
<dbReference type="iPTMnet" id="Q71F54"/>
<dbReference type="PhosphoSitePlus" id="Q71F54"/>
<dbReference type="PaxDb" id="10116-ENSRNOP00000013815"/>
<dbReference type="Ensembl" id="ENSRNOT00000013816.4">
    <property type="protein sequence ID" value="ENSRNOP00000013815.1"/>
    <property type="gene ID" value="ENSRNOG00000010358.8"/>
</dbReference>
<dbReference type="GeneID" id="306417"/>
<dbReference type="KEGG" id="rno:306417"/>
<dbReference type="UCSC" id="RGD:735154">
    <property type="organism name" value="rat"/>
</dbReference>
<dbReference type="AGR" id="RGD:735154"/>
<dbReference type="CTD" id="57630"/>
<dbReference type="RGD" id="735154">
    <property type="gene designation" value="Sh3rf1"/>
</dbReference>
<dbReference type="eggNOG" id="KOG2177">
    <property type="taxonomic scope" value="Eukaryota"/>
</dbReference>
<dbReference type="GeneTree" id="ENSGT00940000155875"/>
<dbReference type="HOGENOM" id="CLU_015769_1_0_1"/>
<dbReference type="InParanoid" id="Q71F54"/>
<dbReference type="OMA" id="HKQRRFL"/>
<dbReference type="OrthoDB" id="19092at2759"/>
<dbReference type="PhylomeDB" id="Q71F54"/>
<dbReference type="TreeFam" id="TF105571"/>
<dbReference type="Reactome" id="R-RNO-9013424">
    <property type="pathway name" value="RHOV GTPase cycle"/>
</dbReference>
<dbReference type="Reactome" id="R-RNO-983168">
    <property type="pathway name" value="Antigen processing: Ubiquitination &amp; Proteasome degradation"/>
</dbReference>
<dbReference type="UniPathway" id="UPA00143"/>
<dbReference type="PRO" id="PR:Q71F54"/>
<dbReference type="Proteomes" id="UP000002494">
    <property type="component" value="Chromosome 16"/>
</dbReference>
<dbReference type="Bgee" id="ENSRNOG00000010358">
    <property type="expression patterns" value="Expressed in duodenum and 18 other cell types or tissues"/>
</dbReference>
<dbReference type="GO" id="GO:0005829">
    <property type="term" value="C:cytosol"/>
    <property type="evidence" value="ECO:0000266"/>
    <property type="project" value="RGD"/>
</dbReference>
<dbReference type="GO" id="GO:0005794">
    <property type="term" value="C:Golgi apparatus"/>
    <property type="evidence" value="ECO:0007669"/>
    <property type="project" value="UniProtKB-SubCell"/>
</dbReference>
<dbReference type="GO" id="GO:0030027">
    <property type="term" value="C:lamellipodium"/>
    <property type="evidence" value="ECO:0000250"/>
    <property type="project" value="UniProtKB"/>
</dbReference>
<dbReference type="GO" id="GO:0048471">
    <property type="term" value="C:perinuclear region of cytoplasm"/>
    <property type="evidence" value="ECO:0007669"/>
    <property type="project" value="UniProtKB-SubCell"/>
</dbReference>
<dbReference type="GO" id="GO:0005078">
    <property type="term" value="F:MAP-kinase scaffold activity"/>
    <property type="evidence" value="ECO:0000250"/>
    <property type="project" value="UniProtKB"/>
</dbReference>
<dbReference type="GO" id="GO:0061630">
    <property type="term" value="F:ubiquitin protein ligase activity"/>
    <property type="evidence" value="ECO:0000250"/>
    <property type="project" value="UniProtKB"/>
</dbReference>
<dbReference type="GO" id="GO:0008270">
    <property type="term" value="F:zinc ion binding"/>
    <property type="evidence" value="ECO:0007669"/>
    <property type="project" value="UniProtKB-KW"/>
</dbReference>
<dbReference type="GO" id="GO:0043066">
    <property type="term" value="P:negative regulation of apoptotic process"/>
    <property type="evidence" value="ECO:0000266"/>
    <property type="project" value="RGD"/>
</dbReference>
<dbReference type="GO" id="GO:2001237">
    <property type="term" value="P:negative regulation of extrinsic apoptotic signaling pathway"/>
    <property type="evidence" value="ECO:0000266"/>
    <property type="project" value="RGD"/>
</dbReference>
<dbReference type="GO" id="GO:0001764">
    <property type="term" value="P:neuron migration"/>
    <property type="evidence" value="ECO:0000250"/>
    <property type="project" value="UniProtKB"/>
</dbReference>
<dbReference type="GO" id="GO:0046330">
    <property type="term" value="P:positive regulation of JNK cascade"/>
    <property type="evidence" value="ECO:0000250"/>
    <property type="project" value="UniProtKB"/>
</dbReference>
<dbReference type="GO" id="GO:0032436">
    <property type="term" value="P:positive regulation of proteasomal ubiquitin-dependent protein catabolic process"/>
    <property type="evidence" value="ECO:0000318"/>
    <property type="project" value="GO_Central"/>
</dbReference>
<dbReference type="GO" id="GO:0051865">
    <property type="term" value="P:protein autoubiquitination"/>
    <property type="evidence" value="ECO:0000250"/>
    <property type="project" value="UniProtKB"/>
</dbReference>
<dbReference type="GO" id="GO:0016567">
    <property type="term" value="P:protein ubiquitination"/>
    <property type="evidence" value="ECO:0000318"/>
    <property type="project" value="GO_Central"/>
</dbReference>
<dbReference type="GO" id="GO:0043370">
    <property type="term" value="P:regulation of CD4-positive, alpha-beta T cell differentiation"/>
    <property type="evidence" value="ECO:0000250"/>
    <property type="project" value="UniProtKB"/>
</dbReference>
<dbReference type="GO" id="GO:2000564">
    <property type="term" value="P:regulation of CD8-positive, alpha-beta T cell proliferation"/>
    <property type="evidence" value="ECO:0000250"/>
    <property type="project" value="UniProtKB"/>
</dbReference>
<dbReference type="GO" id="GO:1904044">
    <property type="term" value="P:response to aldosterone"/>
    <property type="evidence" value="ECO:0000270"/>
    <property type="project" value="RGD"/>
</dbReference>
<dbReference type="CDD" id="cd16748">
    <property type="entry name" value="RING-HC_SH3RF1"/>
    <property type="match status" value="1"/>
</dbReference>
<dbReference type="CDD" id="cd11930">
    <property type="entry name" value="SH3_SH3RF1_2"/>
    <property type="match status" value="1"/>
</dbReference>
<dbReference type="CDD" id="cd11785">
    <property type="entry name" value="SH3_SH3RF_C"/>
    <property type="match status" value="1"/>
</dbReference>
<dbReference type="FunFam" id="3.30.40.10:FF:000077">
    <property type="entry name" value="E3 ubiquitin-protein ligase SH3RF1 isoform X1"/>
    <property type="match status" value="1"/>
</dbReference>
<dbReference type="FunFam" id="2.30.30.40:FF:000063">
    <property type="entry name" value="Putative E3 ubiquitin-protein ligase SH3RF1"/>
    <property type="match status" value="1"/>
</dbReference>
<dbReference type="FunFam" id="2.30.30.40:FF:000091">
    <property type="entry name" value="Putative E3 ubiquitin-protein ligase SH3RF1"/>
    <property type="match status" value="1"/>
</dbReference>
<dbReference type="FunFam" id="2.30.30.40:FF:000118">
    <property type="entry name" value="Putative E3 ubiquitin-protein ligase SH3RF1"/>
    <property type="match status" value="1"/>
</dbReference>
<dbReference type="FunFam" id="2.30.30.40:FF:000001">
    <property type="entry name" value="Sorbin and SH3 domain-containing protein 1 isoform 2"/>
    <property type="match status" value="1"/>
</dbReference>
<dbReference type="Gene3D" id="2.30.30.40">
    <property type="entry name" value="SH3 Domains"/>
    <property type="match status" value="4"/>
</dbReference>
<dbReference type="Gene3D" id="3.30.40.10">
    <property type="entry name" value="Zinc/RING finger domain, C3HC4 (zinc finger)"/>
    <property type="match status" value="1"/>
</dbReference>
<dbReference type="InterPro" id="IPR050384">
    <property type="entry name" value="Endophilin_SH3RF"/>
</dbReference>
<dbReference type="InterPro" id="IPR036028">
    <property type="entry name" value="SH3-like_dom_sf"/>
</dbReference>
<dbReference type="InterPro" id="IPR001452">
    <property type="entry name" value="SH3_domain"/>
</dbReference>
<dbReference type="InterPro" id="IPR035816">
    <property type="entry name" value="SH3RF1/SH3RF3_SH3_4"/>
</dbReference>
<dbReference type="InterPro" id="IPR035795">
    <property type="entry name" value="SH3RF1_SH3_2"/>
</dbReference>
<dbReference type="InterPro" id="IPR001841">
    <property type="entry name" value="Znf_RING"/>
</dbReference>
<dbReference type="InterPro" id="IPR013083">
    <property type="entry name" value="Znf_RING/FYVE/PHD"/>
</dbReference>
<dbReference type="InterPro" id="IPR017907">
    <property type="entry name" value="Znf_RING_CS"/>
</dbReference>
<dbReference type="PANTHER" id="PTHR14167:SF92">
    <property type="entry name" value="CIN85 AND CD2AP RELATED, ISOFORM J"/>
    <property type="match status" value="1"/>
</dbReference>
<dbReference type="PANTHER" id="PTHR14167">
    <property type="entry name" value="SH3 DOMAIN-CONTAINING"/>
    <property type="match status" value="1"/>
</dbReference>
<dbReference type="Pfam" id="PF00018">
    <property type="entry name" value="SH3_1"/>
    <property type="match status" value="2"/>
</dbReference>
<dbReference type="Pfam" id="PF14604">
    <property type="entry name" value="SH3_9"/>
    <property type="match status" value="2"/>
</dbReference>
<dbReference type="Pfam" id="PF13923">
    <property type="entry name" value="zf-C3HC4_2"/>
    <property type="match status" value="1"/>
</dbReference>
<dbReference type="PRINTS" id="PR00499">
    <property type="entry name" value="P67PHOX"/>
</dbReference>
<dbReference type="PRINTS" id="PR00452">
    <property type="entry name" value="SH3DOMAIN"/>
</dbReference>
<dbReference type="SMART" id="SM00184">
    <property type="entry name" value="RING"/>
    <property type="match status" value="1"/>
</dbReference>
<dbReference type="SMART" id="SM00326">
    <property type="entry name" value="SH3"/>
    <property type="match status" value="4"/>
</dbReference>
<dbReference type="SUPFAM" id="SSF57850">
    <property type="entry name" value="RING/U-box"/>
    <property type="match status" value="1"/>
</dbReference>
<dbReference type="SUPFAM" id="SSF50044">
    <property type="entry name" value="SH3-domain"/>
    <property type="match status" value="4"/>
</dbReference>
<dbReference type="PROSITE" id="PS50002">
    <property type="entry name" value="SH3"/>
    <property type="match status" value="4"/>
</dbReference>
<dbReference type="PROSITE" id="PS00518">
    <property type="entry name" value="ZF_RING_1"/>
    <property type="match status" value="1"/>
</dbReference>
<dbReference type="PROSITE" id="PS50089">
    <property type="entry name" value="ZF_RING_2"/>
    <property type="match status" value="1"/>
</dbReference>
<accession>Q71F54</accession>
<protein>
    <recommendedName>
        <fullName>E3 ubiquitin-protein ligase SH3RF1</fullName>
        <ecNumber evidence="3">2.3.2.27</ecNumber>
    </recommendedName>
    <alternativeName>
        <fullName>Plenty of SH3s</fullName>
        <shortName>Protein POSH</shortName>
    </alternativeName>
    <alternativeName>
        <fullName evidence="11">RING-type E3 ubiquitin transferase SH3RF1</fullName>
    </alternativeName>
    <alternativeName>
        <fullName>SH3 domain-containing RING finger protein 1</fullName>
    </alternativeName>
    <alternativeName>
        <fullName>SH3 multiple domains protein 2</fullName>
    </alternativeName>
</protein>
<keyword id="KW-0966">Cell projection</keyword>
<keyword id="KW-0963">Cytoplasm</keyword>
<keyword id="KW-0333">Golgi apparatus</keyword>
<keyword id="KW-0479">Metal-binding</keyword>
<keyword id="KW-0597">Phosphoprotein</keyword>
<keyword id="KW-1185">Reference proteome</keyword>
<keyword id="KW-0677">Repeat</keyword>
<keyword id="KW-0728">SH3 domain</keyword>
<keyword id="KW-0808">Transferase</keyword>
<keyword id="KW-0832">Ubl conjugation</keyword>
<keyword id="KW-0833">Ubl conjugation pathway</keyword>
<keyword id="KW-0862">Zinc</keyword>
<keyword id="KW-0863">Zinc-finger</keyword>
<sequence>MDESALLDLLECPVCLERLDASAKVLPCQHTFCKRCLLGIVGSRNELRCPECRTLVGSGVDELPSNILLVRLLDGIKQRPWKPGPGGGGSTTCTNVLRAQGSTVVNCGSKDLQSPQCGQQPRVQAWSPPVRGIPQLPCAKALYNYEGKEPGDLKFSKGDIIILRRQVDENWYHGEVNGVHGFFPTNFVQIIKPLPQPPPQCKALYDFEVKDKEADKDCLPFAKDDVLTVIRRVDENWAEGMLADKIGIFPISYVEFNSAAKQLIEWDKPPVPGVDTAECPSATAAQSSSASKHSDTKKNTRKRHSFTSLTMANKSSQASQNRHSMEISPPVLISSSNPTAAARISELSGLSCSAPSQVHISTTGLIVTPPPSSPVTTGPSFTFPTDVPYQAALGTMNPPLPPPPLLATTVLASTPSGATAAAVAAAAAAVAAGVGPRPAVGSTEQIAHLRPQTRPSVYVAIYPYTPRKEDELELRKGEMFLVFERCQDGWYKGTSMHTSKIGVFPGNYVAPVTRAVTNASQAKVPMSTAGQASRGVTMVSPSTAGGPAQKPQGNGVAGNPSVVPTAVVSAAHIQTSPQAKVLLHMTGQMTVNQARNAVRTVAAHNQERPTAAVTPIQVQNAACIGPASVGLPHHSLASQPLPPMVGPAAHIAAVNINRTSVPLACAAGASSLASPNMTTAALETEPSGRTVTILPGLPTSPESAASACGNSSAVKPDKDSKKEKKGLLKLLSGASTKRKPRVSPPASPTLDVELGSGEVPLQGAVGPELPLGGVHGRVGSCPTDGDGPVAAGTAALAQDAFHRKTSSLDSAVPIAPPPRQACSSLGPVMNEARPVVCERHRVVVSYPPQSEAELELKEGDIVFVHKKREDGWFKGTLQRNGKTGLFPGSFVENI</sequence>
<comment type="function">
    <text evidence="2 3 7">Has E3 ubiquitin-protein ligase activity. In the absence of an external substrate, it can catalyze self-ubiquitination. Stimulates ubiquitination of potassium channel KCNJ1, enhancing it's dynamin-dependent and clathrin-independent endocytosis (By similarity). Acts as a scaffold protein that coordinates with MAPK8IP1/JIP1 in organizing different components of the JNK pathway, including RAC1 or RAC2, MAP3K11/MLK3 or MAP3K7/TAK1, MAP2K7/MKK7, MAPK8/JNK1 and/or MAPK9/JNK2 into a functional multiprotein complex to ensure the effective activation of the JNK signaling pathway (PubMed:12514131). Regulates the differentiation of CD4(+) and CD8(+) T-cells and promotes T-helper 1 (Th1) cell differentiation. Regulates the activation of MAPK8/JNK1 and MAPK9/JNK2 in CD4(+) T-cells and the activation of MAPK8/JNK1 in CD8(+) T-cells. Plays a crucial role in the migration of neocortical neurons in the developing brain. Controls proper cortical neuronal migration and the formation of proximal cytoplasmic dilation in the leading process (PCDLP) in migratory neocortical neurons by regulating the proper localization of activated RAC1 and F-actin assembly (By similarity).</text>
</comment>
<comment type="catalytic activity">
    <reaction evidence="3">
        <text>S-ubiquitinyl-[E2 ubiquitin-conjugating enzyme]-L-cysteine + [acceptor protein]-L-lysine = [E2 ubiquitin-conjugating enzyme]-L-cysteine + N(6)-ubiquitinyl-[acceptor protein]-L-lysine.</text>
        <dbReference type="EC" id="2.3.2.27"/>
    </reaction>
</comment>
<comment type="pathway">
    <text>Protein modification; protein ubiquitination.</text>
</comment>
<comment type="subunit">
    <text evidence="2 3 7 8 9 10">Interacts with HERP1. Interacts with RAC1; in a GTP-dependent manner (By similarity). Interacts with MAP3K10/MLK2 and MAP3K11/MLK3. Interacts with MAPK8IP; this interaction leads to the PJAC complex (POSH-JIP or SH3RF1/MAPK8IP apoptotic complex) with a 1:1 ratio. Interacts with SIAH1. Probably part of a signaling complex that may contain SH3RF1, MAPK8IP, DLK1, MAP2K4/MKK4, MAP2K7/MKK7, MAPK8/JNK1, MAPK9/JNK2, AKT1 and AKT2 (PubMed:12514131, PubMed:16230351, PubMed:16571722). Found in a complex with RAC2, MAP3K7/TAK1, MAP2K7/MKK7, MAPK8IP1/JIP1, MAPK8/JNK1 and MAPK9/JNK2. Found in a complex with RAC1, MAP3K11/MLK3, MAP2K7/MKK7, MAPK8IP1/JIP1 and MAPK8/JNK1 (By similarity). Interacts with SH3RF2 (PubMed:22128169).</text>
</comment>
<comment type="interaction">
    <interactant intactId="EBI-957526">
        <id>Q71F54</id>
    </interactant>
    <interactant intactId="EBI-957514">
        <id>Q920M9</id>
        <label>Siah1</label>
    </interactant>
    <organismsDiffer>false</organismsDiffer>
    <experiments>2</experiments>
</comment>
<comment type="subcellular location">
    <subcellularLocation>
        <location evidence="9">Cytoplasm</location>
        <location evidence="9">Perinuclear region</location>
    </subcellularLocation>
    <subcellularLocation>
        <location evidence="2">Cell projection</location>
        <location evidence="2">Lamellipodium</location>
    </subcellularLocation>
    <subcellularLocation>
        <location evidence="2">Golgi apparatus</location>
        <location evidence="2">trans-Golgi network</location>
    </subcellularLocation>
    <text evidence="2 3">Colocalizes, with AKT2, in lamellipodia. Colocalizes, with HERP1, in trans-Golgi network.</text>
</comment>
<comment type="domain">
    <text evidence="3">The RING finger domain is required for ubiquitin ligase activity and autoubiquitination.</text>
</comment>
<comment type="PTM">
    <text evidence="3">Phosphorylated at Ser-305 by AKT1 and AKT2. When phosphorylated, it has reduced ability to bind Rac.</text>
</comment>
<comment type="PTM">
    <text evidence="7 10">Autoubiquitinated. Ubiquitinated by SH3RF2, leading to proteasome-mediated degradation.</text>
</comment>
<comment type="similarity">
    <text evidence="11">Belongs to the SH3RF family.</text>
</comment>
<gene>
    <name type="primary">Sh3rf1</name>
    <name type="synonym">Posh</name>
    <name evidence="3" type="synonym">Posh1</name>
    <name type="synonym">Sh3md2</name>
</gene>
<reference key="1">
    <citation type="journal article" date="2003" name="EMBO J.">
        <title>POSH acts as a scaffold for a multiprotein complex that mediates JNK activation in apoptosis.</title>
        <authorList>
            <person name="Xu Z."/>
            <person name="Kukekov N.V."/>
            <person name="Greene L.A."/>
        </authorList>
    </citation>
    <scope>NUCLEOTIDE SEQUENCE [MRNA]</scope>
    <scope>INTERACTION WITH MAP3K10; MAP3K11; DLK1; MAP2K4; MAP2K7; MAPK8 AND MAPK9</scope>
    <scope>UBIQUITINATION</scope>
    <scope>FUNCTION</scope>
    <source>
        <strain>New England Deaconess Hospital</strain>
    </source>
</reference>
<reference key="2">
    <citation type="journal article" date="2006" name="J. Biol. Chem.">
        <title>Siah1 interacts with the scaffold protein POSH to promote JNK activation and apoptosis.</title>
        <authorList>
            <person name="Xu Z."/>
            <person name="Sproul A."/>
            <person name="Wang W."/>
            <person name="Kukekov N."/>
            <person name="Greene L.A."/>
        </authorList>
    </citation>
    <scope>INTERACTION WITH SIAH1</scope>
</reference>
<reference key="3">
    <citation type="journal article" date="2006" name="J. Biol. Chem.">
        <title>Direct interaction of the molecular scaffolds POSH and JIP is required for apoptotic activation of JNKs.</title>
        <authorList>
            <person name="Kukekov N.V."/>
            <person name="Xu Z."/>
            <person name="Greene L.A."/>
        </authorList>
    </citation>
    <scope>INTERACTION WITH MAPK8IP</scope>
    <scope>SUBCELLULAR LOCATION</scope>
</reference>
<reference key="4">
    <citation type="journal article" date="2012" name="J. Biol. Chem.">
        <title>Sh3rf2/POSHER protein promotes cell survival by RING-mediated proteasomal degradation of the c-Jun N-terminal kinase scaffold POSH (Plenty of SH3s) protein.</title>
        <authorList>
            <person name="Wilhelm M."/>
            <person name="Kukekov N.V."/>
            <person name="Schmit T.L."/>
            <person name="Biagas K.V."/>
            <person name="Sproul A.A."/>
            <person name="Gire S."/>
            <person name="Maes M.E."/>
            <person name="Xu Z."/>
            <person name="Greene L.A."/>
        </authorList>
    </citation>
    <scope>INTERACTION WITH SH3RF2</scope>
    <scope>UBIQUITINATION</scope>
    <scope>PROTEASOMAL DEGRADATION</scope>
</reference>
<reference key="5">
    <citation type="journal article" date="2012" name="Nat. Commun.">
        <title>Quantitative maps of protein phosphorylation sites across 14 different rat organs and tissues.</title>
        <authorList>
            <person name="Lundby A."/>
            <person name="Secher A."/>
            <person name="Lage K."/>
            <person name="Nordsborg N.B."/>
            <person name="Dmytriyev A."/>
            <person name="Lundby C."/>
            <person name="Olsen J.V."/>
        </authorList>
    </citation>
    <scope>PHOSPHORYLATION [LARGE SCALE ANALYSIS] AT SER-743</scope>
    <scope>IDENTIFICATION BY MASS SPECTROMETRY [LARGE SCALE ANALYSIS]</scope>
</reference>